<reference key="1">
    <citation type="journal article" date="2008" name="Genome Res.">
        <title>Chlamydia trachomatis: genome sequence analysis of lymphogranuloma venereum isolates.</title>
        <authorList>
            <person name="Thomson N.R."/>
            <person name="Holden M.T.G."/>
            <person name="Carder C."/>
            <person name="Lennard N."/>
            <person name="Lockey S.J."/>
            <person name="Marsh P."/>
            <person name="Skipp P."/>
            <person name="O'Connor C.D."/>
            <person name="Goodhead I."/>
            <person name="Norbertzcak H."/>
            <person name="Harris B."/>
            <person name="Ormond D."/>
            <person name="Rance R."/>
            <person name="Quail M.A."/>
            <person name="Parkhill J."/>
            <person name="Stephens R.S."/>
            <person name="Clarke I.N."/>
        </authorList>
    </citation>
    <scope>NUCLEOTIDE SEQUENCE [LARGE SCALE GENOMIC DNA]</scope>
    <source>
        <strain>UCH-1/proctitis</strain>
    </source>
</reference>
<organism>
    <name type="scientific">Chlamydia trachomatis serovar L2b (strain UCH-1/proctitis)</name>
    <dbReference type="NCBI Taxonomy" id="471473"/>
    <lineage>
        <taxon>Bacteria</taxon>
        <taxon>Pseudomonadati</taxon>
        <taxon>Chlamydiota</taxon>
        <taxon>Chlamydiia</taxon>
        <taxon>Chlamydiales</taxon>
        <taxon>Chlamydiaceae</taxon>
        <taxon>Chlamydia/Chlamydophila group</taxon>
        <taxon>Chlamydia</taxon>
    </lineage>
</organism>
<feature type="chain" id="PRO_1000205179" description="Chaperone protein DnaK">
    <location>
        <begin position="1"/>
        <end position="660"/>
    </location>
</feature>
<feature type="region of interest" description="Disordered" evidence="2">
    <location>
        <begin position="599"/>
        <end position="660"/>
    </location>
</feature>
<feature type="compositionally biased region" description="Low complexity" evidence="2">
    <location>
        <begin position="600"/>
        <end position="617"/>
    </location>
</feature>
<feature type="modified residue" description="Phosphothreonine; by autocatalysis" evidence="1">
    <location>
        <position position="201"/>
    </location>
</feature>
<name>DNAK_CHLTB</name>
<keyword id="KW-0067">ATP-binding</keyword>
<keyword id="KW-0143">Chaperone</keyword>
<keyword id="KW-0547">Nucleotide-binding</keyword>
<keyword id="KW-0597">Phosphoprotein</keyword>
<keyword id="KW-0346">Stress response</keyword>
<sequence length="660" mass="70843">MSEKRKSNKIIGIDLGTTNSCVSVMEGGQPKVIASSEGTRTTPSIVAFKGGETLVGIPAKRQAVTNPEKTLASTKRFIGRKFSEVESEIKTVPYKVAPNSKGDAVFDVEQKLYTPEEIGAQILMKMKETAEAYLGETVTEAVITVPAYFNDSQRASTKDAGRIAGLDVKRIIPEPTAAALAYGIDKEGDKKIAVFDLGGGTFDISILEIGDGVFEVLSTNGDTHLGGDDFDGVIINWMLDEFKKQEGIDLSKDNMALQRLKDAAEKAKIELSGVSSTEINQPFITIDANGPKHLALTLTRAQFEHLASSLIERTKQPCAQALKDAKLSASDIDDVLLVGGMSRMPAVQAVVKEIFGKEPNKGVNPDEVVAIGAAIQGGVLGGEVKDVLLLDVIPLSLGIETLGGVMTPLVERNTTIPTQKKQIFSTAADNQPAVTIVVLQGERPMAKDNKEIGRFDLTDIPPAPRGHPQIEVTFDIDANGILHVSAKDAASGREQKIRIEASSGLKEDEIQQMIRDAELHKEEDKQRKEASDVKNEADGMIFRAEKAVKDYHDKIPAELVKEIEEHIEKVRQAIKEDASTTAIKAASDELSTRMQKIGEAMQAQSASAAASSAANAQGGPNINSEDLKKHSFSTRPPAGGSASSTDNIEDADVEIVDKPE</sequence>
<accession>B0BC31</accession>
<dbReference type="EMBL" id="AM884177">
    <property type="protein sequence ID" value="CAP07046.1"/>
    <property type="molecule type" value="Genomic_DNA"/>
</dbReference>
<dbReference type="RefSeq" id="WP_009872626.1">
    <property type="nucleotide sequence ID" value="NC_010280.2"/>
</dbReference>
<dbReference type="SMR" id="B0BC31"/>
<dbReference type="KEGG" id="ctl:CTLon_0649"/>
<dbReference type="HOGENOM" id="CLU_005965_2_1_0"/>
<dbReference type="Proteomes" id="UP001154401">
    <property type="component" value="Chromosome"/>
</dbReference>
<dbReference type="GO" id="GO:0005524">
    <property type="term" value="F:ATP binding"/>
    <property type="evidence" value="ECO:0007669"/>
    <property type="project" value="UniProtKB-UniRule"/>
</dbReference>
<dbReference type="GO" id="GO:0140662">
    <property type="term" value="F:ATP-dependent protein folding chaperone"/>
    <property type="evidence" value="ECO:0007669"/>
    <property type="project" value="InterPro"/>
</dbReference>
<dbReference type="GO" id="GO:0051082">
    <property type="term" value="F:unfolded protein binding"/>
    <property type="evidence" value="ECO:0007669"/>
    <property type="project" value="InterPro"/>
</dbReference>
<dbReference type="CDD" id="cd10234">
    <property type="entry name" value="ASKHA_NBD_HSP70_DnaK-like"/>
    <property type="match status" value="1"/>
</dbReference>
<dbReference type="FunFam" id="2.60.34.10:FF:000014">
    <property type="entry name" value="Chaperone protein DnaK HSP70"/>
    <property type="match status" value="1"/>
</dbReference>
<dbReference type="FunFam" id="3.30.30.30:FF:000005">
    <property type="entry name" value="Heat shock protein ssb1"/>
    <property type="match status" value="1"/>
</dbReference>
<dbReference type="FunFam" id="1.20.1270.10:FF:000001">
    <property type="entry name" value="Molecular chaperone DnaK"/>
    <property type="match status" value="1"/>
</dbReference>
<dbReference type="FunFam" id="3.30.420.40:FF:000004">
    <property type="entry name" value="Molecular chaperone DnaK"/>
    <property type="match status" value="1"/>
</dbReference>
<dbReference type="FunFam" id="3.90.640.10:FF:000003">
    <property type="entry name" value="Molecular chaperone DnaK"/>
    <property type="match status" value="1"/>
</dbReference>
<dbReference type="Gene3D" id="1.20.1270.10">
    <property type="match status" value="1"/>
</dbReference>
<dbReference type="Gene3D" id="3.30.420.40">
    <property type="match status" value="2"/>
</dbReference>
<dbReference type="Gene3D" id="3.90.640.10">
    <property type="entry name" value="Actin, Chain A, domain 4"/>
    <property type="match status" value="1"/>
</dbReference>
<dbReference type="Gene3D" id="2.60.34.10">
    <property type="entry name" value="Substrate Binding Domain Of DNAk, Chain A, domain 1"/>
    <property type="match status" value="1"/>
</dbReference>
<dbReference type="HAMAP" id="MF_00332">
    <property type="entry name" value="DnaK"/>
    <property type="match status" value="1"/>
</dbReference>
<dbReference type="InterPro" id="IPR043129">
    <property type="entry name" value="ATPase_NBD"/>
</dbReference>
<dbReference type="InterPro" id="IPR012725">
    <property type="entry name" value="Chaperone_DnaK"/>
</dbReference>
<dbReference type="InterPro" id="IPR018181">
    <property type="entry name" value="Heat_shock_70_CS"/>
</dbReference>
<dbReference type="InterPro" id="IPR029048">
    <property type="entry name" value="HSP70_C_sf"/>
</dbReference>
<dbReference type="InterPro" id="IPR029047">
    <property type="entry name" value="HSP70_peptide-bd_sf"/>
</dbReference>
<dbReference type="InterPro" id="IPR013126">
    <property type="entry name" value="Hsp_70_fam"/>
</dbReference>
<dbReference type="NCBIfam" id="NF001413">
    <property type="entry name" value="PRK00290.1"/>
    <property type="match status" value="1"/>
</dbReference>
<dbReference type="NCBIfam" id="TIGR02350">
    <property type="entry name" value="prok_dnaK"/>
    <property type="match status" value="1"/>
</dbReference>
<dbReference type="PANTHER" id="PTHR19375">
    <property type="entry name" value="HEAT SHOCK PROTEIN 70KDA"/>
    <property type="match status" value="1"/>
</dbReference>
<dbReference type="Pfam" id="PF00012">
    <property type="entry name" value="HSP70"/>
    <property type="match status" value="1"/>
</dbReference>
<dbReference type="PRINTS" id="PR00301">
    <property type="entry name" value="HEATSHOCK70"/>
</dbReference>
<dbReference type="SUPFAM" id="SSF53067">
    <property type="entry name" value="Actin-like ATPase domain"/>
    <property type="match status" value="2"/>
</dbReference>
<dbReference type="SUPFAM" id="SSF100934">
    <property type="entry name" value="Heat shock protein 70kD (HSP70), C-terminal subdomain"/>
    <property type="match status" value="1"/>
</dbReference>
<dbReference type="SUPFAM" id="SSF100920">
    <property type="entry name" value="Heat shock protein 70kD (HSP70), peptide-binding domain"/>
    <property type="match status" value="1"/>
</dbReference>
<dbReference type="PROSITE" id="PS00297">
    <property type="entry name" value="HSP70_1"/>
    <property type="match status" value="1"/>
</dbReference>
<dbReference type="PROSITE" id="PS00329">
    <property type="entry name" value="HSP70_2"/>
    <property type="match status" value="1"/>
</dbReference>
<dbReference type="PROSITE" id="PS01036">
    <property type="entry name" value="HSP70_3"/>
    <property type="match status" value="1"/>
</dbReference>
<proteinExistence type="inferred from homology"/>
<comment type="function">
    <text evidence="1">Acts as a chaperone.</text>
</comment>
<comment type="induction">
    <text evidence="1">By stress conditions e.g. heat shock.</text>
</comment>
<comment type="similarity">
    <text evidence="1">Belongs to the heat shock protein 70 family.</text>
</comment>
<evidence type="ECO:0000255" key="1">
    <source>
        <dbReference type="HAMAP-Rule" id="MF_00332"/>
    </source>
</evidence>
<evidence type="ECO:0000256" key="2">
    <source>
        <dbReference type="SAM" id="MobiDB-lite"/>
    </source>
</evidence>
<protein>
    <recommendedName>
        <fullName evidence="1">Chaperone protein DnaK</fullName>
    </recommendedName>
    <alternativeName>
        <fullName evidence="1">HSP70</fullName>
    </alternativeName>
    <alternativeName>
        <fullName evidence="1">Heat shock 70 kDa protein</fullName>
    </alternativeName>
    <alternativeName>
        <fullName evidence="1">Heat shock protein 70</fullName>
    </alternativeName>
</protein>
<gene>
    <name evidence="1" type="primary">dnaK</name>
    <name type="ordered locus">CTLon_0649</name>
</gene>